<protein>
    <recommendedName>
        <fullName>MKI67 FHA domain-interacting nucleolar phosphoprotein</fullName>
    </recommendedName>
    <alternativeName>
        <fullName>Nucleolar phosphoprotein NOPP34-like protein</fullName>
    </alternativeName>
</protein>
<dbReference type="EMBL" id="AF506200">
    <property type="protein sequence ID" value="AAM34644.1"/>
    <property type="molecule type" value="mRNA"/>
</dbReference>
<dbReference type="EMBL" id="BC071545">
    <property type="protein sequence ID" value="AAH71545.1"/>
    <property type="molecule type" value="mRNA"/>
</dbReference>
<dbReference type="RefSeq" id="NP_775395.2">
    <property type="nucleotide sequence ID" value="NM_173288.2"/>
</dbReference>
<dbReference type="SMR" id="Q8JIY8"/>
<dbReference type="BioGRID" id="79942">
    <property type="interactions" value="1"/>
</dbReference>
<dbReference type="FunCoup" id="Q8JIY8">
    <property type="interactions" value="1525"/>
</dbReference>
<dbReference type="STRING" id="7955.ENSDARP00000059548"/>
<dbReference type="PaxDb" id="7955-ENSDARP00000059548"/>
<dbReference type="Ensembl" id="ENSDART00000059549">
    <property type="protein sequence ID" value="ENSDARP00000059548"/>
    <property type="gene ID" value="ENSDARG00000040666"/>
</dbReference>
<dbReference type="GeneID" id="317644"/>
<dbReference type="KEGG" id="dre:317644"/>
<dbReference type="AGR" id="ZFIN:ZDB-GENE-021231-4"/>
<dbReference type="CTD" id="84365"/>
<dbReference type="ZFIN" id="ZDB-GENE-021231-4">
    <property type="gene designation" value="nifk"/>
</dbReference>
<dbReference type="eggNOG" id="KOG4208">
    <property type="taxonomic scope" value="Eukaryota"/>
</dbReference>
<dbReference type="HOGENOM" id="CLU_025741_1_0_1"/>
<dbReference type="InParanoid" id="Q8JIY8"/>
<dbReference type="OMA" id="FECKDVA"/>
<dbReference type="OrthoDB" id="21467at2759"/>
<dbReference type="PhylomeDB" id="Q8JIY8"/>
<dbReference type="TreeFam" id="TF315137"/>
<dbReference type="PRO" id="PR:Q8JIY8"/>
<dbReference type="Proteomes" id="UP000000437">
    <property type="component" value="Chromosome 9"/>
</dbReference>
<dbReference type="Bgee" id="ENSDARG00000040666">
    <property type="expression patterns" value="Expressed in gastrula and 30 other cell types or tissues"/>
</dbReference>
<dbReference type="ExpressionAtlas" id="Q8JIY8">
    <property type="expression patterns" value="baseline"/>
</dbReference>
<dbReference type="GO" id="GO:0005730">
    <property type="term" value="C:nucleolus"/>
    <property type="evidence" value="ECO:0000318"/>
    <property type="project" value="GO_Central"/>
</dbReference>
<dbReference type="GO" id="GO:0003723">
    <property type="term" value="F:RNA binding"/>
    <property type="evidence" value="ECO:0000318"/>
    <property type="project" value="GO_Central"/>
</dbReference>
<dbReference type="CDD" id="cd12307">
    <property type="entry name" value="RRM_NIFK_like"/>
    <property type="match status" value="1"/>
</dbReference>
<dbReference type="Gene3D" id="3.30.70.330">
    <property type="match status" value="1"/>
</dbReference>
<dbReference type="InterPro" id="IPR021043">
    <property type="entry name" value="NIFK_FHA_Ki67-binding"/>
</dbReference>
<dbReference type="InterPro" id="IPR012677">
    <property type="entry name" value="Nucleotide-bd_a/b_plait_sf"/>
</dbReference>
<dbReference type="InterPro" id="IPR035979">
    <property type="entry name" value="RBD_domain_sf"/>
</dbReference>
<dbReference type="InterPro" id="IPR000504">
    <property type="entry name" value="RRM_dom"/>
</dbReference>
<dbReference type="PANTHER" id="PTHR46754">
    <property type="entry name" value="MKI67 FHA DOMAIN-INTERACTING NUCLEOLAR PHOSPHOPROTEIN"/>
    <property type="match status" value="1"/>
</dbReference>
<dbReference type="Pfam" id="PF12196">
    <property type="entry name" value="hNIFK_binding"/>
    <property type="match status" value="1"/>
</dbReference>
<dbReference type="Pfam" id="PF00076">
    <property type="entry name" value="RRM_1"/>
    <property type="match status" value="1"/>
</dbReference>
<dbReference type="SMART" id="SM00360">
    <property type="entry name" value="RRM"/>
    <property type="match status" value="1"/>
</dbReference>
<dbReference type="SUPFAM" id="SSF54928">
    <property type="entry name" value="RNA-binding domain, RBD"/>
    <property type="match status" value="1"/>
</dbReference>
<dbReference type="PROSITE" id="PS50102">
    <property type="entry name" value="RRM"/>
    <property type="match status" value="1"/>
</dbReference>
<name>MK67I_DANRE</name>
<keyword id="KW-0217">Developmental protein</keyword>
<keyword id="KW-0539">Nucleus</keyword>
<keyword id="KW-1185">Reference proteome</keyword>
<keyword id="KW-0694">RNA-binding</keyword>
<organism>
    <name type="scientific">Danio rerio</name>
    <name type="common">Zebrafish</name>
    <name type="synonym">Brachydanio rerio</name>
    <dbReference type="NCBI Taxonomy" id="7955"/>
    <lineage>
        <taxon>Eukaryota</taxon>
        <taxon>Metazoa</taxon>
        <taxon>Chordata</taxon>
        <taxon>Craniata</taxon>
        <taxon>Vertebrata</taxon>
        <taxon>Euteleostomi</taxon>
        <taxon>Actinopterygii</taxon>
        <taxon>Neopterygii</taxon>
        <taxon>Teleostei</taxon>
        <taxon>Ostariophysi</taxon>
        <taxon>Cypriniformes</taxon>
        <taxon>Danionidae</taxon>
        <taxon>Danioninae</taxon>
        <taxon>Danio</taxon>
    </lineage>
</organism>
<reference key="1">
    <citation type="journal article" date="2002" name="Nat. Genet.">
        <title>Insertional mutagenesis in zebrafish rapidly identifies genes essential for early vertebrate development.</title>
        <authorList>
            <person name="Golling G."/>
            <person name="Amsterdam A."/>
            <person name="Sun Z."/>
            <person name="Antonelli M."/>
            <person name="Maldonado E."/>
            <person name="Chen W."/>
            <person name="Burgess S."/>
            <person name="Haldi M."/>
            <person name="Artzt K."/>
            <person name="Farrington S."/>
            <person name="Lin S.-Y."/>
            <person name="Nissen R.M."/>
            <person name="Hopkins N."/>
        </authorList>
    </citation>
    <scope>NUCLEOTIDE SEQUENCE [LARGE SCALE MRNA]</scope>
    <scope>FUNCTION</scope>
    <scope>DISRUPTION PHENOTYPE</scope>
    <source>
        <tissue>Embryo</tissue>
    </source>
</reference>
<reference key="2">
    <citation type="submission" date="2004-06" db="EMBL/GenBank/DDBJ databases">
        <authorList>
            <consortium name="NIH - Zebrafish Gene Collection (ZGC) project"/>
        </authorList>
    </citation>
    <scope>NUCLEOTIDE SEQUENCE [LARGE SCALE MRNA]</scope>
    <source>
        <tissue>Embryo</tissue>
    </source>
</reference>
<comment type="function">
    <text evidence="4">Plays an essential role in early embryonic development.</text>
</comment>
<comment type="subcellular location">
    <subcellularLocation>
        <location evidence="1">Nucleus</location>
        <location evidence="1">Nucleolus</location>
    </subcellularLocation>
</comment>
<comment type="disruption phenotype">
    <text evidence="4">Embryos have various defects including smaller heads and eyes.</text>
</comment>
<proteinExistence type="evidence at transcript level"/>
<evidence type="ECO:0000250" key="1"/>
<evidence type="ECO:0000255" key="2">
    <source>
        <dbReference type="PROSITE-ProRule" id="PRU00176"/>
    </source>
</evidence>
<evidence type="ECO:0000256" key="3">
    <source>
        <dbReference type="SAM" id="MobiDB-lite"/>
    </source>
</evidence>
<evidence type="ECO:0000269" key="4">
    <source>
    </source>
</evidence>
<evidence type="ECO:0000305" key="5"/>
<sequence length="269" mass="30099">MTEGKSSDKPAKRLLALNPKEDAEFQKKVQQVKKRPQTGQTLSPGVLYVGHLPRGLFEPQLKSYFEQFGKVLRLRVSRSKKTGGSKGYGFVEFECDEVAKIVAETMNNYLMGERIIKCHVIPPEKVHEKLFVGSIAGFKKPKYPAVTRYNKTHTEDDVKKVGTKLLSKESKLRKRLAAKGIDYDFPGFAAQIPAKKAPSEANVSVCSEDVTPVCTPSLLERRKSLRVEDDDVDDEIVIKVKPLPENSDDVEESEEESAEEDEGEEEEAA</sequence>
<feature type="chain" id="PRO_0000081631" description="MKI67 FHA domain-interacting nucleolar phosphoprotein">
    <location>
        <begin position="1"/>
        <end position="269"/>
    </location>
</feature>
<feature type="domain" description="RRM" evidence="2">
    <location>
        <begin position="45"/>
        <end position="123"/>
    </location>
</feature>
<feature type="region of interest" description="Disordered" evidence="3">
    <location>
        <begin position="234"/>
        <end position="269"/>
    </location>
</feature>
<feature type="compositionally biased region" description="Acidic residues" evidence="3">
    <location>
        <begin position="246"/>
        <end position="269"/>
    </location>
</feature>
<feature type="sequence conflict" description="In Ref. 1; AAM34644." evidence="5" ref="1">
    <original>L</original>
    <variation>V</variation>
    <location>
        <position position="243"/>
    </location>
</feature>
<accession>Q8JIY8</accession>
<accession>Q6IQ65</accession>
<gene>
    <name type="primary">nifk</name>
    <name type="synonym">mki67ip</name>
    <name type="synonym">mki67ipl</name>
</gene>